<reference key="1">
    <citation type="journal article" date="1991" name="Plant Mol. Biol.">
        <title>Nucleotide sequence of the Spirodela oligorrhiza chloroplast psbA gene coding for the D1 (32 kDa) photosystem II protein.</title>
        <authorList>
            <person name="Avni A."/>
            <person name="Mehta R.A."/>
            <person name="Mattoo A.K."/>
            <person name="Greenberg B.M."/>
            <person name="Chattoo B.B."/>
            <person name="Heller D."/>
            <person name="Edelman M."/>
        </authorList>
    </citation>
    <scope>NUCLEOTIDE SEQUENCE [GENOMIC DNA]</scope>
</reference>
<keyword id="KW-0007">Acetylation</keyword>
<keyword id="KW-0106">Calcium</keyword>
<keyword id="KW-0148">Chlorophyll</keyword>
<keyword id="KW-0150">Chloroplast</keyword>
<keyword id="KW-0157">Chromophore</keyword>
<keyword id="KW-0249">Electron transport</keyword>
<keyword id="KW-0359">Herbicide resistance</keyword>
<keyword id="KW-0408">Iron</keyword>
<keyword id="KW-0460">Magnesium</keyword>
<keyword id="KW-0464">Manganese</keyword>
<keyword id="KW-0472">Membrane</keyword>
<keyword id="KW-0479">Metal-binding</keyword>
<keyword id="KW-0560">Oxidoreductase</keyword>
<keyword id="KW-0597">Phosphoprotein</keyword>
<keyword id="KW-0602">Photosynthesis</keyword>
<keyword id="KW-0604">Photosystem II</keyword>
<keyword id="KW-0934">Plastid</keyword>
<keyword id="KW-0793">Thylakoid</keyword>
<keyword id="KW-0812">Transmembrane</keyword>
<keyword id="KW-1133">Transmembrane helix</keyword>
<keyword id="KW-0813">Transport</keyword>
<proteinExistence type="inferred from homology"/>
<sequence length="353" mass="39009">MTAILERRESTSLWGRFCNWVTSTENRLYIGWFGVLMIPTLLTATSVFIIAFIAAPPVDIDGIREPVSGSLLYGNNIISGAIIPTSAAIGLHFYPIWEAASVDEWLYNGGPYELIVLHFLLGVRCYMGREWELSFRLGMRPWIAVAYSAPVAAATAVFLIYPIGQGSFSDGMPLGISGTFNFMIVFQAEHNILMHPFHMLGVAGVFGGSLFSAMHGSLVTSSLIRETTENESANEGYRFGQEEETYNIVAAHGYFGRLIFQYASFNNSRSLHFFLAAWPVIGIWFTSLGISTMAFNLNGFNFNQSVVDSQGRVINTWADIINRANLGMEVMHERNAHNFPLDLAAVEAPSTIG</sequence>
<feature type="initiator methionine" description="Removed" evidence="1">
    <location>
        <position position="1"/>
    </location>
</feature>
<feature type="chain" id="PRO_0000090472" description="Photosystem II protein D1" evidence="1">
    <location>
        <begin position="2"/>
        <end position="344"/>
    </location>
</feature>
<feature type="propeptide" id="PRO_0000316486" evidence="1">
    <location>
        <begin position="345"/>
        <end position="353"/>
    </location>
</feature>
<feature type="transmembrane region" description="Helical" evidence="1">
    <location>
        <begin position="29"/>
        <end position="46"/>
    </location>
</feature>
<feature type="transmembrane region" description="Helical" evidence="1">
    <location>
        <begin position="118"/>
        <end position="133"/>
    </location>
</feature>
<feature type="transmembrane region" description="Helical" evidence="1">
    <location>
        <begin position="142"/>
        <end position="156"/>
    </location>
</feature>
<feature type="transmembrane region" description="Helical" evidence="1">
    <location>
        <begin position="197"/>
        <end position="218"/>
    </location>
</feature>
<feature type="transmembrane region" description="Helical" evidence="1">
    <location>
        <begin position="274"/>
        <end position="288"/>
    </location>
</feature>
<feature type="binding site" description="axial binding residue" evidence="1">
    <location>
        <position position="118"/>
    </location>
    <ligand>
        <name>chlorophyll a</name>
        <dbReference type="ChEBI" id="CHEBI:58416"/>
        <label>ChlzD1</label>
    </ligand>
    <ligandPart>
        <name>Mg</name>
        <dbReference type="ChEBI" id="CHEBI:25107"/>
    </ligandPart>
</feature>
<feature type="binding site" evidence="1">
    <location>
        <position position="126"/>
    </location>
    <ligand>
        <name>pheophytin a</name>
        <dbReference type="ChEBI" id="CHEBI:136840"/>
        <label>D1</label>
    </ligand>
</feature>
<feature type="binding site" evidence="1">
    <location>
        <position position="170"/>
    </location>
    <ligand>
        <name>[CaMn4O5] cluster</name>
        <dbReference type="ChEBI" id="CHEBI:189552"/>
    </ligand>
</feature>
<feature type="binding site" evidence="1">
    <location>
        <position position="189"/>
    </location>
    <ligand>
        <name>[CaMn4O5] cluster</name>
        <dbReference type="ChEBI" id="CHEBI:189552"/>
    </ligand>
</feature>
<feature type="binding site" description="axial binding residue" evidence="1">
    <location>
        <position position="198"/>
    </location>
    <ligand>
        <name>chlorophyll a</name>
        <dbReference type="ChEBI" id="CHEBI:58416"/>
        <label>PD1</label>
    </ligand>
    <ligandPart>
        <name>Mg</name>
        <dbReference type="ChEBI" id="CHEBI:25107"/>
    </ligandPart>
</feature>
<feature type="binding site" evidence="1">
    <location>
        <position position="215"/>
    </location>
    <ligand>
        <name>a quinone</name>
        <dbReference type="ChEBI" id="CHEBI:132124"/>
        <label>B</label>
    </ligand>
</feature>
<feature type="binding site" evidence="1">
    <location>
        <position position="215"/>
    </location>
    <ligand>
        <name>Fe cation</name>
        <dbReference type="ChEBI" id="CHEBI:24875"/>
        <note>ligand shared with heterodimeric partner</note>
    </ligand>
</feature>
<feature type="binding site" evidence="1">
    <location>
        <begin position="264"/>
        <end position="265"/>
    </location>
    <ligand>
        <name>a quinone</name>
        <dbReference type="ChEBI" id="CHEBI:132124"/>
        <label>B</label>
    </ligand>
</feature>
<feature type="binding site" evidence="1">
    <location>
        <position position="272"/>
    </location>
    <ligand>
        <name>Fe cation</name>
        <dbReference type="ChEBI" id="CHEBI:24875"/>
        <note>ligand shared with heterodimeric partner</note>
    </ligand>
</feature>
<feature type="binding site" evidence="1">
    <location>
        <position position="332"/>
    </location>
    <ligand>
        <name>[CaMn4O5] cluster</name>
        <dbReference type="ChEBI" id="CHEBI:189552"/>
    </ligand>
</feature>
<feature type="binding site" evidence="1">
    <location>
        <position position="333"/>
    </location>
    <ligand>
        <name>[CaMn4O5] cluster</name>
        <dbReference type="ChEBI" id="CHEBI:189552"/>
    </ligand>
</feature>
<feature type="binding site" evidence="1">
    <location>
        <position position="342"/>
    </location>
    <ligand>
        <name>[CaMn4O5] cluster</name>
        <dbReference type="ChEBI" id="CHEBI:189552"/>
    </ligand>
</feature>
<feature type="binding site" evidence="1">
    <location>
        <position position="344"/>
    </location>
    <ligand>
        <name>[CaMn4O5] cluster</name>
        <dbReference type="ChEBI" id="CHEBI:189552"/>
    </ligand>
</feature>
<feature type="site" description="Tyrosine radical intermediate" evidence="1">
    <location>
        <position position="161"/>
    </location>
</feature>
<feature type="site" description="Stabilizes free radical intermediate" evidence="1">
    <location>
        <position position="190"/>
    </location>
</feature>
<feature type="site" description="Cleavage; by CTPA" evidence="1">
    <location>
        <begin position="344"/>
        <end position="345"/>
    </location>
</feature>
<feature type="modified residue" description="N-acetylthreonine" evidence="1">
    <location>
        <position position="2"/>
    </location>
</feature>
<feature type="modified residue" description="Phosphothreonine" evidence="1">
    <location>
        <position position="2"/>
    </location>
</feature>
<evidence type="ECO:0000255" key="1">
    <source>
        <dbReference type="HAMAP-Rule" id="MF_01379"/>
    </source>
</evidence>
<evidence type="ECO:0000303" key="2">
    <source>
    </source>
</evidence>
<organism>
    <name type="scientific">Landoltia punctata</name>
    <name type="common">Dotted duckmeat</name>
    <name type="synonym">Spirodela oligorrhiza</name>
    <dbReference type="NCBI Taxonomy" id="50518"/>
    <lineage>
        <taxon>Eukaryota</taxon>
        <taxon>Viridiplantae</taxon>
        <taxon>Streptophyta</taxon>
        <taxon>Embryophyta</taxon>
        <taxon>Tracheophyta</taxon>
        <taxon>Spermatophyta</taxon>
        <taxon>Magnoliopsida</taxon>
        <taxon>Liliopsida</taxon>
        <taxon>Araceae</taxon>
        <taxon>Lemnoideae</taxon>
        <taxon>Landoltia</taxon>
    </lineage>
</organism>
<geneLocation type="chloroplast"/>
<gene>
    <name evidence="1" type="primary">psbA</name>
</gene>
<protein>
    <recommendedName>
        <fullName evidence="1">Photosystem II protein D1</fullName>
        <shortName evidence="1">PSII D1 protein</shortName>
        <ecNumber evidence="1">1.10.3.9</ecNumber>
    </recommendedName>
    <alternativeName>
        <fullName evidence="2">32 kDa thylakoid membrane protein</fullName>
    </alternativeName>
    <alternativeName>
        <fullName evidence="1">Photosystem II Q(B) protein</fullName>
    </alternativeName>
</protein>
<dbReference type="EC" id="1.10.3.9" evidence="1"/>
<dbReference type="EMBL" id="X59557">
    <property type="protein sequence ID" value="CAA42156.1"/>
    <property type="molecule type" value="Genomic_DNA"/>
</dbReference>
<dbReference type="PIR" id="S17738">
    <property type="entry name" value="F2DWD1"/>
</dbReference>
<dbReference type="SMR" id="P27201"/>
<dbReference type="SwissPalm" id="P27201"/>
<dbReference type="GO" id="GO:0009535">
    <property type="term" value="C:chloroplast thylakoid membrane"/>
    <property type="evidence" value="ECO:0007669"/>
    <property type="project" value="UniProtKB-SubCell"/>
</dbReference>
<dbReference type="GO" id="GO:0009523">
    <property type="term" value="C:photosystem II"/>
    <property type="evidence" value="ECO:0007669"/>
    <property type="project" value="UniProtKB-KW"/>
</dbReference>
<dbReference type="GO" id="GO:0016168">
    <property type="term" value="F:chlorophyll binding"/>
    <property type="evidence" value="ECO:0007669"/>
    <property type="project" value="UniProtKB-UniRule"/>
</dbReference>
<dbReference type="GO" id="GO:0045156">
    <property type="term" value="F:electron transporter, transferring electrons within the cyclic electron transport pathway of photosynthesis activity"/>
    <property type="evidence" value="ECO:0007669"/>
    <property type="project" value="InterPro"/>
</dbReference>
<dbReference type="GO" id="GO:0005506">
    <property type="term" value="F:iron ion binding"/>
    <property type="evidence" value="ECO:0007669"/>
    <property type="project" value="UniProtKB-UniRule"/>
</dbReference>
<dbReference type="GO" id="GO:0016682">
    <property type="term" value="F:oxidoreductase activity, acting on diphenols and related substances as donors, oxygen as acceptor"/>
    <property type="evidence" value="ECO:0007669"/>
    <property type="project" value="UniProtKB-UniRule"/>
</dbReference>
<dbReference type="GO" id="GO:0010242">
    <property type="term" value="F:oxygen evolving activity"/>
    <property type="evidence" value="ECO:0007669"/>
    <property type="project" value="UniProtKB-EC"/>
</dbReference>
<dbReference type="GO" id="GO:0009772">
    <property type="term" value="P:photosynthetic electron transport in photosystem II"/>
    <property type="evidence" value="ECO:0007669"/>
    <property type="project" value="InterPro"/>
</dbReference>
<dbReference type="GO" id="GO:0009635">
    <property type="term" value="P:response to herbicide"/>
    <property type="evidence" value="ECO:0007669"/>
    <property type="project" value="UniProtKB-KW"/>
</dbReference>
<dbReference type="CDD" id="cd09289">
    <property type="entry name" value="Photosystem-II_D1"/>
    <property type="match status" value="1"/>
</dbReference>
<dbReference type="FunFam" id="1.20.85.10:FF:000002">
    <property type="entry name" value="Photosystem II protein D1"/>
    <property type="match status" value="1"/>
</dbReference>
<dbReference type="Gene3D" id="1.20.85.10">
    <property type="entry name" value="Photosystem II protein D1-like"/>
    <property type="match status" value="1"/>
</dbReference>
<dbReference type="HAMAP" id="MF_01379">
    <property type="entry name" value="PSII_PsbA_D1"/>
    <property type="match status" value="1"/>
</dbReference>
<dbReference type="InterPro" id="IPR055266">
    <property type="entry name" value="D1/D2"/>
</dbReference>
<dbReference type="InterPro" id="IPR036854">
    <property type="entry name" value="Photo_II_D1/D2_sf"/>
</dbReference>
<dbReference type="InterPro" id="IPR000484">
    <property type="entry name" value="Photo_RC_L/M"/>
</dbReference>
<dbReference type="InterPro" id="IPR055265">
    <property type="entry name" value="Photo_RC_L/M_CS"/>
</dbReference>
<dbReference type="InterPro" id="IPR005867">
    <property type="entry name" value="PSII_D1"/>
</dbReference>
<dbReference type="NCBIfam" id="TIGR01151">
    <property type="entry name" value="psbA"/>
    <property type="match status" value="1"/>
</dbReference>
<dbReference type="PANTHER" id="PTHR33149:SF12">
    <property type="entry name" value="PHOTOSYSTEM II D2 PROTEIN"/>
    <property type="match status" value="1"/>
</dbReference>
<dbReference type="PANTHER" id="PTHR33149">
    <property type="entry name" value="PHOTOSYSTEM II PROTEIN D1"/>
    <property type="match status" value="1"/>
</dbReference>
<dbReference type="Pfam" id="PF00124">
    <property type="entry name" value="Photo_RC"/>
    <property type="match status" value="1"/>
</dbReference>
<dbReference type="PRINTS" id="PR00256">
    <property type="entry name" value="REACTNCENTRE"/>
</dbReference>
<dbReference type="SUPFAM" id="SSF81483">
    <property type="entry name" value="Bacterial photosystem II reaction centre, L and M subunits"/>
    <property type="match status" value="1"/>
</dbReference>
<dbReference type="PROSITE" id="PS00244">
    <property type="entry name" value="REACTION_CENTER"/>
    <property type="match status" value="1"/>
</dbReference>
<name>PSBA_LANPU</name>
<comment type="function">
    <text evidence="1">Photosystem II (PSII) is a light-driven water:plastoquinone oxidoreductase that uses light energy to abstract electrons from H(2)O, generating O(2) and a proton gradient subsequently used for ATP formation. It consists of a core antenna complex that captures photons, and an electron transfer chain that converts photonic excitation into a charge separation. The D1/D2 (PsbA/PsbD) reaction center heterodimer binds P680, the primary electron donor of PSII as well as several subsequent electron acceptors.</text>
</comment>
<comment type="catalytic activity">
    <reaction evidence="1">
        <text>2 a plastoquinone + 4 hnu + 2 H2O = 2 a plastoquinol + O2</text>
        <dbReference type="Rhea" id="RHEA:36359"/>
        <dbReference type="Rhea" id="RHEA-COMP:9561"/>
        <dbReference type="Rhea" id="RHEA-COMP:9562"/>
        <dbReference type="ChEBI" id="CHEBI:15377"/>
        <dbReference type="ChEBI" id="CHEBI:15379"/>
        <dbReference type="ChEBI" id="CHEBI:17757"/>
        <dbReference type="ChEBI" id="CHEBI:30212"/>
        <dbReference type="ChEBI" id="CHEBI:62192"/>
        <dbReference type="EC" id="1.10.3.9"/>
    </reaction>
</comment>
<comment type="cofactor">
    <text evidence="1">The D1/D2 heterodimer binds P680, chlorophylls that are the primary electron donor of PSII, and subsequent electron acceptors. It shares a non-heme iron and each subunit binds pheophytin, quinone, additional chlorophylls, carotenoids and lipids. D1 provides most of the ligands for the Mn4-Ca-O5 cluster of the oxygen-evolving complex (OEC). There is also a Cl(-1) ion associated with D1 and D2, which is required for oxygen evolution. The PSII complex binds additional chlorophylls, carotenoids and specific lipids.</text>
</comment>
<comment type="subunit">
    <text evidence="1">PSII is composed of 1 copy each of membrane proteins PsbA, PsbB, PsbC, PsbD, PsbE, PsbF, PsbH, PsbI, PsbJ, PsbK, PsbL, PsbM, PsbT, PsbX, PsbY, PsbZ, Psb30/Ycf12, at least 3 peripheral proteins of the oxygen-evolving complex and a large number of cofactors. It forms dimeric complexes.</text>
</comment>
<comment type="subcellular location">
    <subcellularLocation>
        <location evidence="1">Plastid</location>
        <location evidence="1">Chloroplast thylakoid membrane</location>
        <topology evidence="1">Multi-pass membrane protein</topology>
    </subcellularLocation>
</comment>
<comment type="PTM">
    <text evidence="1">Tyr-161 forms a radical intermediate that is referred to as redox-active TyrZ, YZ or Y-Z.</text>
</comment>
<comment type="PTM">
    <text evidence="1">C-terminally processed by CTPA; processing is essential to allow assembly of the oxygen-evolving complex and thus photosynthetic growth.</text>
</comment>
<comment type="miscellaneous">
    <text evidence="1">2 of the reaction center chlorophylls (ChlD1 and ChlD2) are entirely coordinated by water.</text>
</comment>
<comment type="miscellaneous">
    <text evidence="1">Herbicides such as atrazine, BNT, diuron or ioxynil bind in the Q(B) binding site and block subsequent electron transfer.</text>
</comment>
<comment type="similarity">
    <text evidence="1">Belongs to the reaction center PufL/M/PsbA/D family.</text>
</comment>
<accession>P27201</accession>